<accession>O67153</accession>
<organism>
    <name type="scientific">Aquifex aeolicus (strain VF5)</name>
    <dbReference type="NCBI Taxonomy" id="224324"/>
    <lineage>
        <taxon>Bacteria</taxon>
        <taxon>Pseudomonadati</taxon>
        <taxon>Aquificota</taxon>
        <taxon>Aquificia</taxon>
        <taxon>Aquificales</taxon>
        <taxon>Aquificaceae</taxon>
        <taxon>Aquifex</taxon>
    </lineage>
</organism>
<evidence type="ECO:0000250" key="1"/>
<evidence type="ECO:0000305" key="2"/>
<feature type="chain" id="PRO_0000172850" description="Uncharacterized metallophosphoesterase aq_1054">
    <location>
        <begin position="1"/>
        <end position="261"/>
    </location>
</feature>
<feature type="binding site" evidence="1">
    <location>
        <position position="43"/>
    </location>
    <ligand>
        <name>a divalent metal cation</name>
        <dbReference type="ChEBI" id="CHEBI:60240"/>
        <label>1</label>
    </ligand>
</feature>
<feature type="binding site" evidence="1">
    <location>
        <position position="45"/>
    </location>
    <ligand>
        <name>a divalent metal cation</name>
        <dbReference type="ChEBI" id="CHEBI:60240"/>
        <label>1</label>
    </ligand>
</feature>
<feature type="binding site" evidence="1">
    <location>
        <position position="75"/>
    </location>
    <ligand>
        <name>a divalent metal cation</name>
        <dbReference type="ChEBI" id="CHEBI:60240"/>
        <label>1</label>
    </ligand>
</feature>
<feature type="binding site" evidence="1">
    <location>
        <position position="75"/>
    </location>
    <ligand>
        <name>a divalent metal cation</name>
        <dbReference type="ChEBI" id="CHEBI:60240"/>
        <label>2</label>
    </ligand>
</feature>
<feature type="binding site" evidence="1">
    <location>
        <position position="106"/>
    </location>
    <ligand>
        <name>a divalent metal cation</name>
        <dbReference type="ChEBI" id="CHEBI:60240"/>
        <label>2</label>
    </ligand>
</feature>
<feature type="binding site" evidence="1">
    <location>
        <position position="197"/>
    </location>
    <ligand>
        <name>a divalent metal cation</name>
        <dbReference type="ChEBI" id="CHEBI:60240"/>
        <label>2</label>
    </ligand>
</feature>
<feature type="binding site" evidence="1">
    <location>
        <position position="199"/>
    </location>
    <ligand>
        <name>a divalent metal cation</name>
        <dbReference type="ChEBI" id="CHEBI:60240"/>
        <label>1</label>
    </ligand>
</feature>
<dbReference type="EC" id="3.1.-.-"/>
<dbReference type="EMBL" id="AE000657">
    <property type="protein sequence ID" value="AAC07116.1"/>
    <property type="molecule type" value="Genomic_DNA"/>
</dbReference>
<dbReference type="PIR" id="F70390">
    <property type="entry name" value="F70390"/>
</dbReference>
<dbReference type="RefSeq" id="NP_213716.1">
    <property type="nucleotide sequence ID" value="NC_000918.1"/>
</dbReference>
<dbReference type="RefSeq" id="WP_010880654.1">
    <property type="nucleotide sequence ID" value="NC_000918.1"/>
</dbReference>
<dbReference type="SMR" id="O67153"/>
<dbReference type="FunCoup" id="O67153">
    <property type="interactions" value="92"/>
</dbReference>
<dbReference type="EnsemblBacteria" id="AAC07116">
    <property type="protein sequence ID" value="AAC07116"/>
    <property type="gene ID" value="aq_1054"/>
</dbReference>
<dbReference type="KEGG" id="aae:aq_1054"/>
<dbReference type="PATRIC" id="fig|224324.8.peg.817"/>
<dbReference type="eggNOG" id="COG1408">
    <property type="taxonomic scope" value="Bacteria"/>
</dbReference>
<dbReference type="HOGENOM" id="CLU_025443_3_2_0"/>
<dbReference type="InParanoid" id="O67153"/>
<dbReference type="OrthoDB" id="9780884at2"/>
<dbReference type="Proteomes" id="UP000000798">
    <property type="component" value="Chromosome"/>
</dbReference>
<dbReference type="GO" id="GO:0016020">
    <property type="term" value="C:membrane"/>
    <property type="evidence" value="ECO:0007669"/>
    <property type="project" value="GOC"/>
</dbReference>
<dbReference type="GO" id="GO:0046872">
    <property type="term" value="F:metal ion binding"/>
    <property type="evidence" value="ECO:0007669"/>
    <property type="project" value="UniProtKB-KW"/>
</dbReference>
<dbReference type="GO" id="GO:0008758">
    <property type="term" value="F:UDP-2,3-diacylglucosamine hydrolase activity"/>
    <property type="evidence" value="ECO:0000318"/>
    <property type="project" value="GO_Central"/>
</dbReference>
<dbReference type="GO" id="GO:0009245">
    <property type="term" value="P:lipid A biosynthetic process"/>
    <property type="evidence" value="ECO:0000318"/>
    <property type="project" value="GO_Central"/>
</dbReference>
<dbReference type="CDD" id="cd07385">
    <property type="entry name" value="MPP_YkuE_C"/>
    <property type="match status" value="1"/>
</dbReference>
<dbReference type="FunFam" id="3.60.21.10:FF:000028">
    <property type="entry name" value="Putative metallophosphoesterase"/>
    <property type="match status" value="1"/>
</dbReference>
<dbReference type="Gene3D" id="3.60.21.10">
    <property type="match status" value="1"/>
</dbReference>
<dbReference type="InterPro" id="IPR004843">
    <property type="entry name" value="Calcineurin-like_PHP_ApaH"/>
</dbReference>
<dbReference type="InterPro" id="IPR029052">
    <property type="entry name" value="Metallo-depent_PP-like"/>
</dbReference>
<dbReference type="InterPro" id="IPR051158">
    <property type="entry name" value="Metallophosphoesterase_sf"/>
</dbReference>
<dbReference type="PANTHER" id="PTHR31302:SF31">
    <property type="entry name" value="PHOSPHODIESTERASE YAEI"/>
    <property type="match status" value="1"/>
</dbReference>
<dbReference type="PANTHER" id="PTHR31302">
    <property type="entry name" value="TRANSMEMBRANE PROTEIN WITH METALLOPHOSPHOESTERASE DOMAIN-RELATED"/>
    <property type="match status" value="1"/>
</dbReference>
<dbReference type="Pfam" id="PF00149">
    <property type="entry name" value="Metallophos"/>
    <property type="match status" value="1"/>
</dbReference>
<dbReference type="SUPFAM" id="SSF56300">
    <property type="entry name" value="Metallo-dependent phosphatases"/>
    <property type="match status" value="1"/>
</dbReference>
<protein>
    <recommendedName>
        <fullName>Uncharacterized metallophosphoesterase aq_1054</fullName>
        <ecNumber>3.1.-.-</ecNumber>
    </recommendedName>
</protein>
<sequence>MFIAVLLGAYSHLETYFLRVEKYTIETEKLPKGTEIKIMNASDMHLGPVMREDRVEMVKRVYEREKPDILVATGDTVDGNMKNLDYLAQMLAELNPPLGKFAVLGNHEYYVGLNQSLDFLRKAGFRVLRGEAVEINNFLVIAGVDDSDGKRLGYRVFTDELEVLKNVDTKKYVILLKHKPRIKREAIKYVDLVLSGHTHGGVLFFVGYTILRLIFETDRGIKELAPGKYIIVSKGVGTGGPPMRLLSPPDVVIVTIKGKGN</sequence>
<gene>
    <name type="ordered locus">aq_1054</name>
</gene>
<keyword id="KW-0378">Hydrolase</keyword>
<keyword id="KW-0479">Metal-binding</keyword>
<keyword id="KW-1185">Reference proteome</keyword>
<comment type="cofactor">
    <cofactor evidence="1">
        <name>a divalent metal cation</name>
        <dbReference type="ChEBI" id="CHEBI:60240"/>
    </cofactor>
    <text evidence="1">Binds 2 divalent metal cations.</text>
</comment>
<comment type="similarity">
    <text evidence="2">Belongs to the metallophosphoesterase superfamily.</text>
</comment>
<reference key="1">
    <citation type="journal article" date="1998" name="Nature">
        <title>The complete genome of the hyperthermophilic bacterium Aquifex aeolicus.</title>
        <authorList>
            <person name="Deckert G."/>
            <person name="Warren P.V."/>
            <person name="Gaasterland T."/>
            <person name="Young W.G."/>
            <person name="Lenox A.L."/>
            <person name="Graham D.E."/>
            <person name="Overbeek R."/>
            <person name="Snead M.A."/>
            <person name="Keller M."/>
            <person name="Aujay M."/>
            <person name="Huber R."/>
            <person name="Feldman R.A."/>
            <person name="Short J.M."/>
            <person name="Olsen G.J."/>
            <person name="Swanson R.V."/>
        </authorList>
    </citation>
    <scope>NUCLEOTIDE SEQUENCE [LARGE SCALE GENOMIC DNA]</scope>
    <source>
        <strain>VF5</strain>
    </source>
</reference>
<name>Y1054_AQUAE</name>
<proteinExistence type="inferred from homology"/>